<gene>
    <name type="primary">SCG2</name>
</gene>
<comment type="function">
    <text evidence="3">Neuroendocrine protein of the granin family that regulates the biogenesis of secretory granules.</text>
</comment>
<comment type="subunit">
    <text evidence="3">Interacts with Secretogranin III/SCG3.</text>
</comment>
<comment type="subcellular location">
    <subcellularLocation>
        <location>Secreted</location>
    </subcellularLocation>
    <text evidence="1">Neuroendocrine and endocrine secretory granules.</text>
</comment>
<comment type="miscellaneous">
    <text evidence="1">Binds calcium with a low-affinity.</text>
</comment>
<comment type="similarity">
    <text evidence="9">Belongs to the chromogranin/secretogranin protein family.</text>
</comment>
<feature type="signal peptide" evidence="6">
    <location>
        <begin position="1"/>
        <end position="27"/>
    </location>
</feature>
<feature type="propeptide" id="PRO_0000352314" evidence="6">
    <location>
        <begin position="28"/>
        <end position="30"/>
    </location>
</feature>
<feature type="chain" id="PRO_0000352315" description="Secretogranin-2">
    <location>
        <begin position="31"/>
        <end position="616"/>
    </location>
</feature>
<feature type="peptide" id="PRO_0000352316" description="Secretoneurin" evidence="4">
    <location>
        <begin position="181"/>
        <end position="213"/>
    </location>
</feature>
<feature type="peptide" id="PRO_0000432738" description="Manserin" evidence="2">
    <location>
        <begin position="526"/>
        <end position="565"/>
    </location>
</feature>
<feature type="region of interest" description="Disordered" evidence="7">
    <location>
        <begin position="68"/>
        <end position="104"/>
    </location>
</feature>
<feature type="region of interest" description="Disordered" evidence="7">
    <location>
        <begin position="120"/>
        <end position="146"/>
    </location>
</feature>
<feature type="region of interest" description="Disordered" evidence="7">
    <location>
        <begin position="255"/>
        <end position="290"/>
    </location>
</feature>
<feature type="region of interest" description="Disordered" evidence="7">
    <location>
        <begin position="548"/>
        <end position="582"/>
    </location>
</feature>
<feature type="compositionally biased region" description="Basic and acidic residues" evidence="7">
    <location>
        <begin position="92"/>
        <end position="104"/>
    </location>
</feature>
<feature type="compositionally biased region" description="Polar residues" evidence="7">
    <location>
        <begin position="122"/>
        <end position="140"/>
    </location>
</feature>
<feature type="compositionally biased region" description="Basic and acidic residues" evidence="7">
    <location>
        <begin position="255"/>
        <end position="283"/>
    </location>
</feature>
<feature type="compositionally biased region" description="Basic and acidic residues" evidence="7">
    <location>
        <begin position="548"/>
        <end position="560"/>
    </location>
</feature>
<feature type="modified residue" description="Sulfotyrosine" evidence="3">
    <location>
        <position position="150"/>
    </location>
</feature>
<feature type="modified residue" description="Phosphoserine" evidence="2">
    <location>
        <position position="173"/>
    </location>
</feature>
<feature type="modified residue" description="Phosphoserine" evidence="2">
    <location>
        <position position="267"/>
    </location>
</feature>
<feature type="modified residue" description="Phosphoserine" evidence="2">
    <location>
        <position position="431"/>
    </location>
</feature>
<feature type="modified residue" description="Phosphoserine" evidence="5">
    <location>
        <position position="531"/>
    </location>
</feature>
<feature type="modified residue" description="Phosphoserine" evidence="5">
    <location>
        <position position="554"/>
    </location>
</feature>
<feature type="modified residue" description="Phosphoserine" evidence="5">
    <location>
        <position position="555"/>
    </location>
</feature>
<feature type="sequence variant" evidence="8">
    <original>T</original>
    <variation>A</variation>
    <location>
        <position position="208"/>
    </location>
</feature>
<feature type="sequence variant" evidence="8">
    <original>E</original>
    <variation>D</variation>
    <location>
        <position position="557"/>
    </location>
</feature>
<feature type="sequence variant" evidence="8">
    <original>P</original>
    <variation>L</variation>
    <location>
        <position position="573"/>
    </location>
</feature>
<feature type="sequence variant" evidence="8">
    <original>N</original>
    <variation>T</variation>
    <location>
        <position position="597"/>
    </location>
</feature>
<evidence type="ECO:0000250" key="1"/>
<evidence type="ECO:0000250" key="2">
    <source>
        <dbReference type="UniProtKB" id="P10362"/>
    </source>
</evidence>
<evidence type="ECO:0000250" key="3">
    <source>
        <dbReference type="UniProtKB" id="P13521"/>
    </source>
</evidence>
<evidence type="ECO:0000250" key="4">
    <source>
        <dbReference type="UniProtKB" id="P30945"/>
    </source>
</evidence>
<evidence type="ECO:0000250" key="5">
    <source>
        <dbReference type="UniProtKB" id="Q03517"/>
    </source>
</evidence>
<evidence type="ECO:0000255" key="6"/>
<evidence type="ECO:0000256" key="7">
    <source>
        <dbReference type="SAM" id="MobiDB-lite"/>
    </source>
</evidence>
<evidence type="ECO:0000269" key="8">
    <source>
    </source>
</evidence>
<evidence type="ECO:0000305" key="9"/>
<accession>Q5FZP5</accession>
<protein>
    <recommendedName>
        <fullName>Secretogranin-2</fullName>
    </recommendedName>
    <alternativeName>
        <fullName>Secretogranin II</fullName>
        <shortName>SgII</shortName>
    </alternativeName>
    <component>
        <recommendedName>
            <fullName>Secretoneurin</fullName>
            <shortName>SN</shortName>
        </recommendedName>
    </component>
    <component>
        <recommendedName>
            <fullName>Manserin</fullName>
        </recommendedName>
    </component>
</protein>
<organism>
    <name type="scientific">Sus scrofa</name>
    <name type="common">Pig</name>
    <dbReference type="NCBI Taxonomy" id="9823"/>
    <lineage>
        <taxon>Eukaryota</taxon>
        <taxon>Metazoa</taxon>
        <taxon>Chordata</taxon>
        <taxon>Craniata</taxon>
        <taxon>Vertebrata</taxon>
        <taxon>Euteleostomi</taxon>
        <taxon>Mammalia</taxon>
        <taxon>Eutheria</taxon>
        <taxon>Laurasiatheria</taxon>
        <taxon>Artiodactyla</taxon>
        <taxon>Suina</taxon>
        <taxon>Suidae</taxon>
        <taxon>Sus</taxon>
    </lineage>
</organism>
<proteinExistence type="evidence at transcript level"/>
<keyword id="KW-0106">Calcium</keyword>
<keyword id="KW-0165">Cleavage on pair of basic residues</keyword>
<keyword id="KW-0597">Phosphoprotein</keyword>
<keyword id="KW-1185">Reference proteome</keyword>
<keyword id="KW-0964">Secreted</keyword>
<keyword id="KW-0732">Signal</keyword>
<keyword id="KW-0765">Sulfation</keyword>
<reference key="1">
    <citation type="journal article" date="2008" name="Biochem. Genet.">
        <title>Molecular cloning, mapping, and polymorphism of the porcine SCG2 gene.</title>
        <authorList>
            <person name="Du H.L."/>
            <person name="Chen J."/>
            <person name="Zhang Y.S."/>
            <person name="Zhang X.Q."/>
        </authorList>
    </citation>
    <scope>NUCLEOTIDE SEQUENCE [MRNA]</scope>
    <scope>VARIANTS ALA-208; ASP-557; LEU-573 AND THR-597</scope>
</reference>
<sequence length="616" mass="70999">MAEAKTHWLGASLSLILLIFLLATAEAASFQRNQLLQKEPDLRLENVQRFASPEMIRALEYIEKLRQQAHKEESSPDYNPYQGVSVPLQQKENSDLPESSRDSLSEDEWMKILLEALRQAENEPQSSLKENKPYTLNSEKNFPMDMPDDYETQQWPERKLEHMRFPPMYEENSRDNPFKRTNEIVEEQYTPQSLATLESVFQELGKLTGPNNQKRERVDEEQKLYTDDEDDIYKANNIAYEDVVGGEDWNPVEEKIESQTQEEVRDSKENIEKNEQINDEMKRSGQMGLQDEDLRKEGKDQLSEDVSKVIAYLKRLVNAVGSGKSQNGQNGERANRLFEKPLDSQSIYQLIELSRNLQIPPEDLIDMLKTGEKPNASVEPEQELEIPVDLDDISEVDLDHPDLFQNKMLSKNGYSKTPGRAVSEALPDGLSVEDILNLLGMENAANQKPPYFPNQYNREKILPRLPYGPGRAKANQLPKAVWMPDVENRQMAYDNLNDKDQELGEYLARMLVKYPEIMNSNQVKRVPSQGSSEDDLQEENQIEQAIKERLNQHSSQETDKLALVSKRLPVATPKSDDAPNRQYLDEDLLMKVLEYLNQEKAEKGREHIAKRAMENM</sequence>
<dbReference type="EMBL" id="AY870646">
    <property type="protein sequence ID" value="AAW63723.1"/>
    <property type="molecule type" value="mRNA"/>
</dbReference>
<dbReference type="RefSeq" id="NP_001012299.1">
    <property type="nucleotide sequence ID" value="NM_001012299.2"/>
</dbReference>
<dbReference type="SMR" id="Q5FZP5"/>
<dbReference type="FunCoup" id="Q5FZP5">
    <property type="interactions" value="115"/>
</dbReference>
<dbReference type="STRING" id="9823.ENSSSCP00000040210"/>
<dbReference type="PaxDb" id="9823-ENSSSCP00000027906"/>
<dbReference type="PeptideAtlas" id="Q5FZP5"/>
<dbReference type="GeneID" id="497237"/>
<dbReference type="KEGG" id="ssc:497237"/>
<dbReference type="CTD" id="7857"/>
<dbReference type="eggNOG" id="ENOG502QV5W">
    <property type="taxonomic scope" value="Eukaryota"/>
</dbReference>
<dbReference type="InParanoid" id="Q5FZP5"/>
<dbReference type="OrthoDB" id="8894600at2759"/>
<dbReference type="Proteomes" id="UP000008227">
    <property type="component" value="Unplaced"/>
</dbReference>
<dbReference type="Proteomes" id="UP000314985">
    <property type="component" value="Unplaced"/>
</dbReference>
<dbReference type="Proteomes" id="UP000694570">
    <property type="component" value="Unplaced"/>
</dbReference>
<dbReference type="Proteomes" id="UP000694571">
    <property type="component" value="Unplaced"/>
</dbReference>
<dbReference type="Proteomes" id="UP000694720">
    <property type="component" value="Unplaced"/>
</dbReference>
<dbReference type="Proteomes" id="UP000694722">
    <property type="component" value="Unplaced"/>
</dbReference>
<dbReference type="Proteomes" id="UP000694723">
    <property type="component" value="Unplaced"/>
</dbReference>
<dbReference type="Proteomes" id="UP000694724">
    <property type="component" value="Unplaced"/>
</dbReference>
<dbReference type="Proteomes" id="UP000694725">
    <property type="component" value="Unplaced"/>
</dbReference>
<dbReference type="Proteomes" id="UP000694726">
    <property type="component" value="Unplaced"/>
</dbReference>
<dbReference type="Proteomes" id="UP000694727">
    <property type="component" value="Unplaced"/>
</dbReference>
<dbReference type="Proteomes" id="UP000694728">
    <property type="component" value="Unplaced"/>
</dbReference>
<dbReference type="GO" id="GO:0005615">
    <property type="term" value="C:extracellular space"/>
    <property type="evidence" value="ECO:0000318"/>
    <property type="project" value="GO_Central"/>
</dbReference>
<dbReference type="GO" id="GO:0030141">
    <property type="term" value="C:secretory granule"/>
    <property type="evidence" value="ECO:0000318"/>
    <property type="project" value="GO_Central"/>
</dbReference>
<dbReference type="GO" id="GO:0042056">
    <property type="term" value="F:chemoattractant activity"/>
    <property type="evidence" value="ECO:0000318"/>
    <property type="project" value="GO_Central"/>
</dbReference>
<dbReference type="GO" id="GO:0005125">
    <property type="term" value="F:cytokine activity"/>
    <property type="evidence" value="ECO:0000318"/>
    <property type="project" value="GO_Central"/>
</dbReference>
<dbReference type="GO" id="GO:0001525">
    <property type="term" value="P:angiogenesis"/>
    <property type="evidence" value="ECO:0000318"/>
    <property type="project" value="GO_Central"/>
</dbReference>
<dbReference type="GO" id="GO:0048245">
    <property type="term" value="P:eosinophil chemotaxis"/>
    <property type="evidence" value="ECO:0000318"/>
    <property type="project" value="GO_Central"/>
</dbReference>
<dbReference type="InterPro" id="IPR018054">
    <property type="entry name" value="Chromogranin_CS"/>
</dbReference>
<dbReference type="InterPro" id="IPR001990">
    <property type="entry name" value="Granin"/>
</dbReference>
<dbReference type="InterPro" id="IPR038858">
    <property type="entry name" value="ScgII"/>
</dbReference>
<dbReference type="PANTHER" id="PTHR15119">
    <property type="entry name" value="SECRETOGRANIN II"/>
    <property type="match status" value="1"/>
</dbReference>
<dbReference type="PANTHER" id="PTHR15119:SF0">
    <property type="entry name" value="SECRETOGRANIN-2"/>
    <property type="match status" value="1"/>
</dbReference>
<dbReference type="Pfam" id="PF01271">
    <property type="entry name" value="Granin"/>
    <property type="match status" value="1"/>
</dbReference>
<dbReference type="PROSITE" id="PS00422">
    <property type="entry name" value="GRANINS_1"/>
    <property type="match status" value="1"/>
</dbReference>
<name>SCG2_PIG</name>